<feature type="chain" id="PRO_0000406297" description="Probable antitoxin MazE2">
    <location>
        <begin position="1"/>
        <end position="81"/>
    </location>
</feature>
<organism>
    <name type="scientific">Mycobacterium tuberculosis (strain ATCC 25618 / H37Rv)</name>
    <dbReference type="NCBI Taxonomy" id="83332"/>
    <lineage>
        <taxon>Bacteria</taxon>
        <taxon>Bacillati</taxon>
        <taxon>Actinomycetota</taxon>
        <taxon>Actinomycetes</taxon>
        <taxon>Mycobacteriales</taxon>
        <taxon>Mycobacteriaceae</taxon>
        <taxon>Mycobacterium</taxon>
        <taxon>Mycobacterium tuberculosis complex</taxon>
    </lineage>
</organism>
<proteinExistence type="inferred from homology"/>
<gene>
    <name type="primary">mazE2</name>
    <name evidence="2" type="synonym">mazE-mt4</name>
    <name type="ordered locus">Rv0660c</name>
</gene>
<accession>O06779</accession>
<accession>L0T764</accession>
<dbReference type="EMBL" id="AL123456">
    <property type="protein sequence ID" value="CCP43403.1"/>
    <property type="molecule type" value="Genomic_DNA"/>
</dbReference>
<dbReference type="PIR" id="G70534">
    <property type="entry name" value="G70534"/>
</dbReference>
<dbReference type="RefSeq" id="NP_215174.1">
    <property type="nucleotide sequence ID" value="NC_000962.3"/>
</dbReference>
<dbReference type="RefSeq" id="WP_003403381.1">
    <property type="nucleotide sequence ID" value="NZ_NVQJ01000007.1"/>
</dbReference>
<dbReference type="SMR" id="O06779"/>
<dbReference type="STRING" id="83332.Rv0660c"/>
<dbReference type="PaxDb" id="83332-Rv0660c"/>
<dbReference type="DNASU" id="888141"/>
<dbReference type="GeneID" id="888141"/>
<dbReference type="KEGG" id="mtu:Rv0660c"/>
<dbReference type="KEGG" id="mtv:RVBD_0660c"/>
<dbReference type="PATRIC" id="fig|83332.111.peg.733"/>
<dbReference type="TubercuList" id="Rv0660c"/>
<dbReference type="InParanoid" id="O06779"/>
<dbReference type="Proteomes" id="UP000001584">
    <property type="component" value="Chromosome"/>
</dbReference>
<dbReference type="GO" id="GO:0006355">
    <property type="term" value="P:regulation of DNA-templated transcription"/>
    <property type="evidence" value="ECO:0007669"/>
    <property type="project" value="InterPro"/>
</dbReference>
<dbReference type="InterPro" id="IPR002145">
    <property type="entry name" value="CopG"/>
</dbReference>
<dbReference type="Pfam" id="PF01402">
    <property type="entry name" value="RHH_1"/>
    <property type="match status" value="1"/>
</dbReference>
<evidence type="ECO:0000250" key="1">
    <source>
        <dbReference type="UniProtKB" id="O53451"/>
    </source>
</evidence>
<evidence type="ECO:0000303" key="2">
    <source>
    </source>
</evidence>
<evidence type="ECO:0000305" key="3"/>
<name>MAZE2_MYCTU</name>
<sequence length="81" mass="9169">MLSFRADDHDVDLADAWARRLHIGRSELLRDALRRHLAALAADQDVQAYTERPLTDDENALAEIADWGPAEDWADWADAAR</sequence>
<protein>
    <recommendedName>
        <fullName evidence="3">Probable antitoxin MazE2</fullName>
    </recommendedName>
</protein>
<keyword id="KW-1185">Reference proteome</keyword>
<keyword id="KW-1277">Toxin-antitoxin system</keyword>
<reference key="1">
    <citation type="journal article" date="1998" name="Nature">
        <title>Deciphering the biology of Mycobacterium tuberculosis from the complete genome sequence.</title>
        <authorList>
            <person name="Cole S.T."/>
            <person name="Brosch R."/>
            <person name="Parkhill J."/>
            <person name="Garnier T."/>
            <person name="Churcher C.M."/>
            <person name="Harris D.E."/>
            <person name="Gordon S.V."/>
            <person name="Eiglmeier K."/>
            <person name="Gas S."/>
            <person name="Barry C.E. III"/>
            <person name="Tekaia F."/>
            <person name="Badcock K."/>
            <person name="Basham D."/>
            <person name="Brown D."/>
            <person name="Chillingworth T."/>
            <person name="Connor R."/>
            <person name="Davies R.M."/>
            <person name="Devlin K."/>
            <person name="Feltwell T."/>
            <person name="Gentles S."/>
            <person name="Hamlin N."/>
            <person name="Holroyd S."/>
            <person name="Hornsby T."/>
            <person name="Jagels K."/>
            <person name="Krogh A."/>
            <person name="McLean J."/>
            <person name="Moule S."/>
            <person name="Murphy L.D."/>
            <person name="Oliver S."/>
            <person name="Osborne J."/>
            <person name="Quail M.A."/>
            <person name="Rajandream M.A."/>
            <person name="Rogers J."/>
            <person name="Rutter S."/>
            <person name="Seeger K."/>
            <person name="Skelton S."/>
            <person name="Squares S."/>
            <person name="Squares R."/>
            <person name="Sulston J.E."/>
            <person name="Taylor K."/>
            <person name="Whitehead S."/>
            <person name="Barrell B.G."/>
        </authorList>
    </citation>
    <scope>NUCLEOTIDE SEQUENCE [LARGE SCALE GENOMIC DNA]</scope>
    <source>
        <strain>ATCC 25618 / H37Rv</strain>
    </source>
</reference>
<reference key="2">
    <citation type="journal article" date="2006" name="J. Biol. Chem.">
        <title>Characterization of mRNA interferases from Mycobacterium tuberculosis.</title>
        <authorList>
            <person name="Zhu L."/>
            <person name="Zhang Y."/>
            <person name="Teh J.S."/>
            <person name="Zhang J."/>
            <person name="Connell N."/>
            <person name="Rubin H."/>
            <person name="Inouye M."/>
        </authorList>
    </citation>
    <scope>GENE NAME</scope>
    <scope>POSSIBLE FUNCTION</scope>
    <source>
        <strain>ATCC 25618 / H37Rv</strain>
    </source>
</reference>
<comment type="function">
    <text evidence="3">Antitoxin component of a type II toxin-antitoxin (TA) system.</text>
</comment>
<comment type="subunit">
    <text evidence="1">Forms a complex with cognate toxin MazF2.</text>
</comment>